<accession>O94168</accession>
<organism>
    <name type="scientific">Candida tropicalis</name>
    <name type="common">Yeast</name>
    <dbReference type="NCBI Taxonomy" id="5482"/>
    <lineage>
        <taxon>Eukaryota</taxon>
        <taxon>Fungi</taxon>
        <taxon>Dikarya</taxon>
        <taxon>Ascomycota</taxon>
        <taxon>Saccharomycotina</taxon>
        <taxon>Pichiomycetes</taxon>
        <taxon>Debaryomycetaceae</taxon>
        <taxon>Candida/Lodderomyces clade</taxon>
        <taxon>Candida</taxon>
    </lineage>
</organism>
<comment type="function">
    <text evidence="1">Essential for release from glucose repression. It interacts and has functional relationship to the regulatory protein SNF4. Could phosphorylate CAT8 (By similarity).</text>
</comment>
<comment type="catalytic activity">
    <reaction>
        <text>L-seryl-[protein] + ATP = O-phospho-L-seryl-[protein] + ADP + H(+)</text>
        <dbReference type="Rhea" id="RHEA:17989"/>
        <dbReference type="Rhea" id="RHEA-COMP:9863"/>
        <dbReference type="Rhea" id="RHEA-COMP:11604"/>
        <dbReference type="ChEBI" id="CHEBI:15378"/>
        <dbReference type="ChEBI" id="CHEBI:29999"/>
        <dbReference type="ChEBI" id="CHEBI:30616"/>
        <dbReference type="ChEBI" id="CHEBI:83421"/>
        <dbReference type="ChEBI" id="CHEBI:456216"/>
        <dbReference type="EC" id="2.7.11.1"/>
    </reaction>
</comment>
<comment type="catalytic activity">
    <reaction>
        <text>L-threonyl-[protein] + ATP = O-phospho-L-threonyl-[protein] + ADP + H(+)</text>
        <dbReference type="Rhea" id="RHEA:46608"/>
        <dbReference type="Rhea" id="RHEA-COMP:11060"/>
        <dbReference type="Rhea" id="RHEA-COMP:11605"/>
        <dbReference type="ChEBI" id="CHEBI:15378"/>
        <dbReference type="ChEBI" id="CHEBI:30013"/>
        <dbReference type="ChEBI" id="CHEBI:30616"/>
        <dbReference type="ChEBI" id="CHEBI:61977"/>
        <dbReference type="ChEBI" id="CHEBI:456216"/>
        <dbReference type="EC" id="2.7.11.1"/>
    </reaction>
</comment>
<comment type="subcellular location">
    <subcellularLocation>
        <location evidence="1">Nucleus membrane</location>
        <topology evidence="1">Peripheral membrane protein</topology>
    </subcellularLocation>
</comment>
<comment type="similarity">
    <text evidence="5">Belongs to the protein kinase superfamily. CAMK Ser/Thr protein kinase family. SNF1 subfamily.</text>
</comment>
<name>SNF1_CANTR</name>
<dbReference type="EC" id="2.7.11.1"/>
<dbReference type="EMBL" id="AB024535">
    <property type="protein sequence ID" value="BAA75889.1"/>
    <property type="molecule type" value="Genomic_DNA"/>
</dbReference>
<dbReference type="SMR" id="O94168"/>
<dbReference type="VEuPathDB" id="FungiDB:CTMYA2_056000"/>
<dbReference type="VEuPathDB" id="FungiDB:CTRG_05385"/>
<dbReference type="GO" id="GO:0000144">
    <property type="term" value="C:cellular bud neck septin ring"/>
    <property type="evidence" value="ECO:0007669"/>
    <property type="project" value="EnsemblFungi"/>
</dbReference>
<dbReference type="GO" id="GO:0005641">
    <property type="term" value="C:nuclear envelope lumen"/>
    <property type="evidence" value="ECO:0007669"/>
    <property type="project" value="EnsemblFungi"/>
</dbReference>
<dbReference type="GO" id="GO:0031965">
    <property type="term" value="C:nuclear membrane"/>
    <property type="evidence" value="ECO:0007669"/>
    <property type="project" value="UniProtKB-SubCell"/>
</dbReference>
<dbReference type="GO" id="GO:0031588">
    <property type="term" value="C:nucleotide-activated protein kinase complex"/>
    <property type="evidence" value="ECO:0007669"/>
    <property type="project" value="EnsemblFungi"/>
</dbReference>
<dbReference type="GO" id="GO:0005774">
    <property type="term" value="C:vacuolar membrane"/>
    <property type="evidence" value="ECO:0007669"/>
    <property type="project" value="EnsemblFungi"/>
</dbReference>
<dbReference type="GO" id="GO:0004679">
    <property type="term" value="F:AMP-activated protein kinase activity"/>
    <property type="evidence" value="ECO:0007669"/>
    <property type="project" value="EnsemblFungi"/>
</dbReference>
<dbReference type="GO" id="GO:0005524">
    <property type="term" value="F:ATP binding"/>
    <property type="evidence" value="ECO:0007669"/>
    <property type="project" value="UniProtKB-KW"/>
</dbReference>
<dbReference type="GO" id="GO:0005085">
    <property type="term" value="F:guanyl-nucleotide exchange factor activity"/>
    <property type="evidence" value="ECO:0007669"/>
    <property type="project" value="EnsemblFungi"/>
</dbReference>
<dbReference type="GO" id="GO:0042802">
    <property type="term" value="F:identical protein binding"/>
    <property type="evidence" value="ECO:0007669"/>
    <property type="project" value="EnsemblFungi"/>
</dbReference>
<dbReference type="GO" id="GO:0106310">
    <property type="term" value="F:protein serine kinase activity"/>
    <property type="evidence" value="ECO:0007669"/>
    <property type="project" value="RHEA"/>
</dbReference>
<dbReference type="GO" id="GO:0061762">
    <property type="term" value="P:CAMKK-AMPK signaling cascade"/>
    <property type="evidence" value="ECO:0007669"/>
    <property type="project" value="EnsemblFungi"/>
</dbReference>
<dbReference type="GO" id="GO:0042149">
    <property type="term" value="P:cellular response to glucose starvation"/>
    <property type="evidence" value="ECO:0007669"/>
    <property type="project" value="EnsemblFungi"/>
</dbReference>
<dbReference type="GO" id="GO:0000132">
    <property type="term" value="P:establishment of mitotic spindle orientation"/>
    <property type="evidence" value="ECO:0007669"/>
    <property type="project" value="EnsemblFungi"/>
</dbReference>
<dbReference type="GO" id="GO:0071940">
    <property type="term" value="P:fungal-type cell wall assembly"/>
    <property type="evidence" value="ECO:0007669"/>
    <property type="project" value="EnsemblFungi"/>
</dbReference>
<dbReference type="GO" id="GO:0001403">
    <property type="term" value="P:invasive growth in response to glucose limitation"/>
    <property type="evidence" value="ECO:0007669"/>
    <property type="project" value="EnsemblFungi"/>
</dbReference>
<dbReference type="GO" id="GO:0010920">
    <property type="term" value="P:negative regulation of inositol phosphate biosynthetic process"/>
    <property type="evidence" value="ECO:0007669"/>
    <property type="project" value="EnsemblFungi"/>
</dbReference>
<dbReference type="GO" id="GO:1904262">
    <property type="term" value="P:negative regulation of TORC1 signaling"/>
    <property type="evidence" value="ECO:0007669"/>
    <property type="project" value="EnsemblFungi"/>
</dbReference>
<dbReference type="GO" id="GO:0017148">
    <property type="term" value="P:negative regulation of translation"/>
    <property type="evidence" value="ECO:0007669"/>
    <property type="project" value="EnsemblFungi"/>
</dbReference>
<dbReference type="GO" id="GO:1900436">
    <property type="term" value="P:positive regulation of filamentous growth of a population of unicellular organisms in response to starvation"/>
    <property type="evidence" value="ECO:0007669"/>
    <property type="project" value="EnsemblFungi"/>
</dbReference>
<dbReference type="GO" id="GO:0045722">
    <property type="term" value="P:positive regulation of gluconeogenesis"/>
    <property type="evidence" value="ECO:0007669"/>
    <property type="project" value="EnsemblFungi"/>
</dbReference>
<dbReference type="GO" id="GO:0016239">
    <property type="term" value="P:positive regulation of macroautophagy"/>
    <property type="evidence" value="ECO:0007669"/>
    <property type="project" value="EnsemblFungi"/>
</dbReference>
<dbReference type="GO" id="GO:2000222">
    <property type="term" value="P:positive regulation of pseudohyphal growth"/>
    <property type="evidence" value="ECO:0007669"/>
    <property type="project" value="EnsemblFungi"/>
</dbReference>
<dbReference type="GO" id="GO:0045944">
    <property type="term" value="P:positive regulation of transcription by RNA polymerase II"/>
    <property type="evidence" value="ECO:0007669"/>
    <property type="project" value="EnsemblFungi"/>
</dbReference>
<dbReference type="GO" id="GO:2000217">
    <property type="term" value="P:regulation of invasive growth in response to glucose limitation"/>
    <property type="evidence" value="ECO:0007669"/>
    <property type="project" value="EnsemblFungi"/>
</dbReference>
<dbReference type="GO" id="GO:0034976">
    <property type="term" value="P:response to endoplasmic reticulum stress"/>
    <property type="evidence" value="ECO:0007669"/>
    <property type="project" value="EnsemblFungi"/>
</dbReference>
<dbReference type="GO" id="GO:0006986">
    <property type="term" value="P:response to unfolded protein"/>
    <property type="evidence" value="ECO:0007669"/>
    <property type="project" value="EnsemblFungi"/>
</dbReference>
<dbReference type="GO" id="GO:0090606">
    <property type="term" value="P:single-species surface biofilm formation"/>
    <property type="evidence" value="ECO:0007669"/>
    <property type="project" value="EnsemblFungi"/>
</dbReference>
<dbReference type="GO" id="GO:0032933">
    <property type="term" value="P:SREBP signaling pathway"/>
    <property type="evidence" value="ECO:0007669"/>
    <property type="project" value="EnsemblFungi"/>
</dbReference>
<dbReference type="CDD" id="cd12122">
    <property type="entry name" value="AMPKA_C"/>
    <property type="match status" value="1"/>
</dbReference>
<dbReference type="CDD" id="cd14079">
    <property type="entry name" value="STKc_AMPK_alpha"/>
    <property type="match status" value="1"/>
</dbReference>
<dbReference type="CDD" id="cd14334">
    <property type="entry name" value="UBA_SNF1_fungi"/>
    <property type="match status" value="1"/>
</dbReference>
<dbReference type="FunFam" id="1.10.510.10:FF:000544">
    <property type="entry name" value="Non-specific serine/threonine protein kinase"/>
    <property type="match status" value="1"/>
</dbReference>
<dbReference type="FunFam" id="3.30.200.20:FF:000236">
    <property type="entry name" value="Non-specific serine/threonine protein kinase"/>
    <property type="match status" value="1"/>
</dbReference>
<dbReference type="Gene3D" id="3.30.310.80">
    <property type="entry name" value="Kinase associated domain 1, KA1"/>
    <property type="match status" value="1"/>
</dbReference>
<dbReference type="Gene3D" id="1.10.510.10">
    <property type="entry name" value="Transferase(Phosphotransferase) domain 1"/>
    <property type="match status" value="1"/>
</dbReference>
<dbReference type="InterPro" id="IPR032270">
    <property type="entry name" value="AMPK_C"/>
</dbReference>
<dbReference type="InterPro" id="IPR028375">
    <property type="entry name" value="KA1/Ssp2_C"/>
</dbReference>
<dbReference type="InterPro" id="IPR011009">
    <property type="entry name" value="Kinase-like_dom_sf"/>
</dbReference>
<dbReference type="InterPro" id="IPR000719">
    <property type="entry name" value="Prot_kinase_dom"/>
</dbReference>
<dbReference type="InterPro" id="IPR017441">
    <property type="entry name" value="Protein_kinase_ATP_BS"/>
</dbReference>
<dbReference type="InterPro" id="IPR008271">
    <property type="entry name" value="Ser/Thr_kinase_AS"/>
</dbReference>
<dbReference type="InterPro" id="IPR013896">
    <property type="entry name" value="SNF1_UBA"/>
</dbReference>
<dbReference type="PANTHER" id="PTHR24346">
    <property type="entry name" value="MAP/MICROTUBULE AFFINITY-REGULATING KINASE"/>
    <property type="match status" value="1"/>
</dbReference>
<dbReference type="PANTHER" id="PTHR24346:SF110">
    <property type="entry name" value="NON-SPECIFIC SERINE_THREONINE PROTEIN KINASE"/>
    <property type="match status" value="1"/>
</dbReference>
<dbReference type="Pfam" id="PF16579">
    <property type="entry name" value="AdenylateSensor"/>
    <property type="match status" value="1"/>
</dbReference>
<dbReference type="Pfam" id="PF00069">
    <property type="entry name" value="Pkinase"/>
    <property type="match status" value="1"/>
</dbReference>
<dbReference type="Pfam" id="PF08587">
    <property type="entry name" value="UBA_2"/>
    <property type="match status" value="1"/>
</dbReference>
<dbReference type="SMART" id="SM00220">
    <property type="entry name" value="S_TKc"/>
    <property type="match status" value="1"/>
</dbReference>
<dbReference type="SUPFAM" id="SSF103243">
    <property type="entry name" value="KA1-like"/>
    <property type="match status" value="1"/>
</dbReference>
<dbReference type="SUPFAM" id="SSF56112">
    <property type="entry name" value="Protein kinase-like (PK-like)"/>
    <property type="match status" value="1"/>
</dbReference>
<dbReference type="PROSITE" id="PS00107">
    <property type="entry name" value="PROTEIN_KINASE_ATP"/>
    <property type="match status" value="1"/>
</dbReference>
<dbReference type="PROSITE" id="PS50011">
    <property type="entry name" value="PROTEIN_KINASE_DOM"/>
    <property type="match status" value="1"/>
</dbReference>
<dbReference type="PROSITE" id="PS00108">
    <property type="entry name" value="PROTEIN_KINASE_ST"/>
    <property type="match status" value="1"/>
</dbReference>
<gene>
    <name type="primary">SNF1</name>
</gene>
<evidence type="ECO:0000250" key="1"/>
<evidence type="ECO:0000255" key="2">
    <source>
        <dbReference type="PROSITE-ProRule" id="PRU00159"/>
    </source>
</evidence>
<evidence type="ECO:0000255" key="3">
    <source>
        <dbReference type="PROSITE-ProRule" id="PRU10027"/>
    </source>
</evidence>
<evidence type="ECO:0000256" key="4">
    <source>
        <dbReference type="SAM" id="MobiDB-lite"/>
    </source>
</evidence>
<evidence type="ECO:0000305" key="5"/>
<proteinExistence type="inferred from homology"/>
<sequence>MSEQNQGQPDQQHSGDHQHHHHHHHHHHHSQQPAQPIPIDPNVNPANRIGRYQIIKTLGEGSFGKVKLAQHVGTGQKVALKIINRKTLAKSDMQGRVEREISYLRLLRHPHIIKLYDVIKSKDEIIMVIEFAGKELFDYIVQRGKMPEDEARRFFQQIIAAVEYCHRHKIVHRDLKPENLLLDDQLNVKIADFGLSNIMTDGNFLKTSCGSPNYAAPEVISGKLYAGPEVDVWSSGVILYVMLCGRLPFDDEFIPALFKKISNGVYTLPNYLSPGAKHLLTRMLVVNPLNRITIHEIMEDEWFKQDMPDYLLPPDLSKIKTSKIDIDEDVISALSVTMGYDRDEIISVIEKANREAAAGGATPTNQSKSTNEVLDAYLLMKENHTLVKDLKKSKSENIESFLSLSPPPSSSFPNPGSTSSAPGVQQSLTYQTLATVPDLSTLPNSTIAILPTSLPSIHRAYMMETKVNDPQQQIPAPQPTKKLKTRWHFGIRSRSYPLDVMGEIYRALKNLGAEWAKPTEEELWTIRVRWKYDSTPQLRVWQRTNLMKMQIQLFQLEPNNYLVDFKFDGWEQTSDESKNDASLDYKQQDLDEVGSFSAYPFLHLATRLIMELAVNSQSG</sequence>
<keyword id="KW-0067">ATP-binding</keyword>
<keyword id="KW-0119">Carbohydrate metabolism</keyword>
<keyword id="KW-0418">Kinase</keyword>
<keyword id="KW-0472">Membrane</keyword>
<keyword id="KW-0547">Nucleotide-binding</keyword>
<keyword id="KW-0539">Nucleus</keyword>
<keyword id="KW-0597">Phosphoprotein</keyword>
<keyword id="KW-0723">Serine/threonine-protein kinase</keyword>
<keyword id="KW-0808">Transferase</keyword>
<protein>
    <recommendedName>
        <fullName>Carbon catabolite-derepressing protein kinase</fullName>
        <ecNumber>2.7.11.1</ecNumber>
    </recommendedName>
</protein>
<reference key="1">
    <citation type="journal article" date="1999" name="Arch. Microbiol.">
        <title>Expression of the SNF1 gene from candida tropicalis is required for growth on various carbon sources, including glucose.</title>
        <authorList>
            <person name="Kanai T."/>
            <person name="Ogawa K."/>
            <person name="Ueda M."/>
            <person name="Tanaka A."/>
        </authorList>
    </citation>
    <scope>NUCLEOTIDE SEQUENCE [GENOMIC DNA]</scope>
    <source>
        <strain>ATCC 20336 / pK233 / NCYC 997</strain>
    </source>
</reference>
<feature type="chain" id="PRO_0000086668" description="Carbon catabolite-derepressing protein kinase">
    <location>
        <begin position="1"/>
        <end position="619"/>
    </location>
</feature>
<feature type="domain" description="Protein kinase" evidence="2">
    <location>
        <begin position="52"/>
        <end position="303"/>
    </location>
</feature>
<feature type="region of interest" description="Disordered" evidence="4">
    <location>
        <begin position="1"/>
        <end position="45"/>
    </location>
</feature>
<feature type="region of interest" description="Disordered" evidence="4">
    <location>
        <begin position="399"/>
        <end position="423"/>
    </location>
</feature>
<feature type="compositionally biased region" description="Low complexity" evidence="4">
    <location>
        <begin position="1"/>
        <end position="12"/>
    </location>
</feature>
<feature type="compositionally biased region" description="Basic residues" evidence="4">
    <location>
        <begin position="18"/>
        <end position="30"/>
    </location>
</feature>
<feature type="compositionally biased region" description="Low complexity" evidence="4">
    <location>
        <begin position="411"/>
        <end position="420"/>
    </location>
</feature>
<feature type="active site" description="Proton acceptor" evidence="2 3">
    <location>
        <position position="174"/>
    </location>
</feature>
<feature type="binding site" evidence="2">
    <location>
        <begin position="58"/>
        <end position="66"/>
    </location>
    <ligand>
        <name>ATP</name>
        <dbReference type="ChEBI" id="CHEBI:30616"/>
    </ligand>
</feature>
<feature type="binding site" evidence="2">
    <location>
        <position position="81"/>
    </location>
    <ligand>
        <name>ATP</name>
        <dbReference type="ChEBI" id="CHEBI:30616"/>
    </ligand>
</feature>
<feature type="modified residue" description="Phosphothreonine; by autocatalysis" evidence="1">
    <location>
        <position position="207"/>
    </location>
</feature>